<sequence>MTESRQTRLQVKCPTCQTAVVWKPENAFRPFCSQRCKLIDLGGWADGKYTVSSQTESLPEISEPDMAYR</sequence>
<reference key="1">
    <citation type="journal article" date="2007" name="PLoS Genet.">
        <title>Meningococcal genetic variation mechanisms viewed through comparative analysis of serogroup C strain FAM18.</title>
        <authorList>
            <person name="Bentley S.D."/>
            <person name="Vernikos G.S."/>
            <person name="Snyder L.A.S."/>
            <person name="Churcher C."/>
            <person name="Arrowsmith C."/>
            <person name="Chillingworth T."/>
            <person name="Cronin A."/>
            <person name="Davis P.H."/>
            <person name="Holroyd N.E."/>
            <person name="Jagels K."/>
            <person name="Maddison M."/>
            <person name="Moule S."/>
            <person name="Rabbinowitsch E."/>
            <person name="Sharp S."/>
            <person name="Unwin L."/>
            <person name="Whitehead S."/>
            <person name="Quail M.A."/>
            <person name="Achtman M."/>
            <person name="Barrell B.G."/>
            <person name="Saunders N.J."/>
            <person name="Parkhill J."/>
        </authorList>
    </citation>
    <scope>NUCLEOTIDE SEQUENCE [LARGE SCALE GENOMIC DNA]</scope>
    <source>
        <strain>ATCC 700532 / DSM 15464 / FAM18</strain>
    </source>
</reference>
<gene>
    <name evidence="1" type="primary">yacG</name>
    <name type="ordered locus">NMC1842</name>
</gene>
<accession>A1KVV4</accession>
<dbReference type="EMBL" id="AM421808">
    <property type="protein sequence ID" value="CAM11009.1"/>
    <property type="molecule type" value="Genomic_DNA"/>
</dbReference>
<dbReference type="RefSeq" id="WP_002216401.1">
    <property type="nucleotide sequence ID" value="NC_008767.1"/>
</dbReference>
<dbReference type="SMR" id="A1KVV4"/>
<dbReference type="KEGG" id="nmc:NMC1842"/>
<dbReference type="HOGENOM" id="CLU_178280_3_2_4"/>
<dbReference type="Proteomes" id="UP000002286">
    <property type="component" value="Chromosome"/>
</dbReference>
<dbReference type="GO" id="GO:0008657">
    <property type="term" value="F:DNA topoisomerase type II (double strand cut, ATP-hydrolyzing) inhibitor activity"/>
    <property type="evidence" value="ECO:0007669"/>
    <property type="project" value="UniProtKB-UniRule"/>
</dbReference>
<dbReference type="GO" id="GO:0008270">
    <property type="term" value="F:zinc ion binding"/>
    <property type="evidence" value="ECO:0007669"/>
    <property type="project" value="UniProtKB-UniRule"/>
</dbReference>
<dbReference type="GO" id="GO:0006355">
    <property type="term" value="P:regulation of DNA-templated transcription"/>
    <property type="evidence" value="ECO:0007669"/>
    <property type="project" value="InterPro"/>
</dbReference>
<dbReference type="Gene3D" id="3.30.50.10">
    <property type="entry name" value="Erythroid Transcription Factor GATA-1, subunit A"/>
    <property type="match status" value="1"/>
</dbReference>
<dbReference type="HAMAP" id="MF_00649">
    <property type="entry name" value="DNA_gyrase_inhibitor_YacG"/>
    <property type="match status" value="1"/>
</dbReference>
<dbReference type="InterPro" id="IPR005584">
    <property type="entry name" value="DNA_gyrase_inhibitor_YacG"/>
</dbReference>
<dbReference type="InterPro" id="IPR013088">
    <property type="entry name" value="Znf_NHR/GATA"/>
</dbReference>
<dbReference type="PANTHER" id="PTHR36150">
    <property type="entry name" value="DNA GYRASE INHIBITOR YACG"/>
    <property type="match status" value="1"/>
</dbReference>
<dbReference type="PANTHER" id="PTHR36150:SF1">
    <property type="entry name" value="DNA GYRASE INHIBITOR YACG"/>
    <property type="match status" value="1"/>
</dbReference>
<dbReference type="Pfam" id="PF03884">
    <property type="entry name" value="YacG"/>
    <property type="match status" value="1"/>
</dbReference>
<dbReference type="SUPFAM" id="SSF57716">
    <property type="entry name" value="Glucocorticoid receptor-like (DNA-binding domain)"/>
    <property type="match status" value="1"/>
</dbReference>
<protein>
    <recommendedName>
        <fullName evidence="1">DNA gyrase inhibitor YacG</fullName>
    </recommendedName>
</protein>
<evidence type="ECO:0000255" key="1">
    <source>
        <dbReference type="HAMAP-Rule" id="MF_00649"/>
    </source>
</evidence>
<keyword id="KW-0479">Metal-binding</keyword>
<keyword id="KW-0862">Zinc</keyword>
<comment type="function">
    <text evidence="1">Inhibits all the catalytic activities of DNA gyrase by preventing its interaction with DNA. Acts by binding directly to the C-terminal domain of GyrB, which probably disrupts DNA binding by the gyrase.</text>
</comment>
<comment type="cofactor">
    <cofactor evidence="1">
        <name>Zn(2+)</name>
        <dbReference type="ChEBI" id="CHEBI:29105"/>
    </cofactor>
    <text evidence="1">Binds 1 zinc ion.</text>
</comment>
<comment type="subunit">
    <text evidence="1">Interacts with GyrB.</text>
</comment>
<comment type="similarity">
    <text evidence="1">Belongs to the DNA gyrase inhibitor YacG family.</text>
</comment>
<organism>
    <name type="scientific">Neisseria meningitidis serogroup C / serotype 2a (strain ATCC 700532 / DSM 15464 / FAM18)</name>
    <dbReference type="NCBI Taxonomy" id="272831"/>
    <lineage>
        <taxon>Bacteria</taxon>
        <taxon>Pseudomonadati</taxon>
        <taxon>Pseudomonadota</taxon>
        <taxon>Betaproteobacteria</taxon>
        <taxon>Neisseriales</taxon>
        <taxon>Neisseriaceae</taxon>
        <taxon>Neisseria</taxon>
    </lineage>
</organism>
<name>YACG_NEIMF</name>
<proteinExistence type="inferred from homology"/>
<feature type="chain" id="PRO_1000056979" description="DNA gyrase inhibitor YacG">
    <location>
        <begin position="1"/>
        <end position="69"/>
    </location>
</feature>
<feature type="binding site" evidence="1">
    <location>
        <position position="13"/>
    </location>
    <ligand>
        <name>Zn(2+)</name>
        <dbReference type="ChEBI" id="CHEBI:29105"/>
    </ligand>
</feature>
<feature type="binding site" evidence="1">
    <location>
        <position position="16"/>
    </location>
    <ligand>
        <name>Zn(2+)</name>
        <dbReference type="ChEBI" id="CHEBI:29105"/>
    </ligand>
</feature>
<feature type="binding site" evidence="1">
    <location>
        <position position="32"/>
    </location>
    <ligand>
        <name>Zn(2+)</name>
        <dbReference type="ChEBI" id="CHEBI:29105"/>
    </ligand>
</feature>
<feature type="binding site" evidence="1">
    <location>
        <position position="36"/>
    </location>
    <ligand>
        <name>Zn(2+)</name>
        <dbReference type="ChEBI" id="CHEBI:29105"/>
    </ligand>
</feature>